<dbReference type="EMBL" id="AAYY01000001">
    <property type="protein sequence ID" value="EDP45133.1"/>
    <property type="molecule type" value="Genomic_DNA"/>
</dbReference>
<dbReference type="RefSeq" id="XP_001732347.1">
    <property type="nucleotide sequence ID" value="XM_001732295.1"/>
</dbReference>
<dbReference type="SMR" id="A8PRT2"/>
<dbReference type="FunCoup" id="A8PRT2">
    <property type="interactions" value="257"/>
</dbReference>
<dbReference type="STRING" id="425265.A8PRT2"/>
<dbReference type="GeneID" id="5856653"/>
<dbReference type="KEGG" id="mgl:MGL_0122"/>
<dbReference type="VEuPathDB" id="FungiDB:MGL_0122"/>
<dbReference type="InParanoid" id="A8PRT2"/>
<dbReference type="OMA" id="FAKWTVG"/>
<dbReference type="OrthoDB" id="277235at2759"/>
<dbReference type="Proteomes" id="UP000008837">
    <property type="component" value="Unassembled WGS sequence"/>
</dbReference>
<dbReference type="GO" id="GO:0005739">
    <property type="term" value="C:mitochondrion"/>
    <property type="evidence" value="ECO:0007669"/>
    <property type="project" value="UniProtKB-SubCell"/>
</dbReference>
<dbReference type="GO" id="GO:0003746">
    <property type="term" value="F:translation elongation factor activity"/>
    <property type="evidence" value="ECO:0007669"/>
    <property type="project" value="UniProtKB-UniRule"/>
</dbReference>
<dbReference type="GO" id="GO:0070125">
    <property type="term" value="P:mitochondrial translational elongation"/>
    <property type="evidence" value="ECO:0007669"/>
    <property type="project" value="TreeGrafter"/>
</dbReference>
<dbReference type="Gene3D" id="1.10.8.10">
    <property type="entry name" value="DNA helicase RuvA subunit, C-terminal domain"/>
    <property type="match status" value="1"/>
</dbReference>
<dbReference type="Gene3D" id="3.30.479.20">
    <property type="entry name" value="Elongation factor Ts, dimerisation domain"/>
    <property type="match status" value="2"/>
</dbReference>
<dbReference type="HAMAP" id="MF_00050">
    <property type="entry name" value="EF_Ts"/>
    <property type="match status" value="1"/>
</dbReference>
<dbReference type="InterPro" id="IPR036402">
    <property type="entry name" value="EF-Ts_dimer_sf"/>
</dbReference>
<dbReference type="InterPro" id="IPR001816">
    <property type="entry name" value="Transl_elong_EFTs/EF1B"/>
</dbReference>
<dbReference type="InterPro" id="IPR014039">
    <property type="entry name" value="Transl_elong_EFTs/EF1B_dimer"/>
</dbReference>
<dbReference type="InterPro" id="IPR018101">
    <property type="entry name" value="Transl_elong_Ts_CS"/>
</dbReference>
<dbReference type="PANTHER" id="PTHR11741">
    <property type="entry name" value="ELONGATION FACTOR TS"/>
    <property type="match status" value="1"/>
</dbReference>
<dbReference type="PANTHER" id="PTHR11741:SF0">
    <property type="entry name" value="ELONGATION FACTOR TS, MITOCHONDRIAL"/>
    <property type="match status" value="1"/>
</dbReference>
<dbReference type="Pfam" id="PF00889">
    <property type="entry name" value="EF_TS"/>
    <property type="match status" value="1"/>
</dbReference>
<dbReference type="SUPFAM" id="SSF54713">
    <property type="entry name" value="Elongation factor Ts (EF-Ts), dimerisation domain"/>
    <property type="match status" value="1"/>
</dbReference>
<dbReference type="PROSITE" id="PS01127">
    <property type="entry name" value="EF_TS_2"/>
    <property type="match status" value="1"/>
</dbReference>
<sequence length="406" mass="42310">MRAMRPVAHLARCFCASSSVKETRPSIQAIAELRKALPGTSMLKAREALTASRSPDAPDTDNVEAAIAWLEQTRASDGAKREAKVASRVTAEGTIGLCTLSDGISSPGARAAMVELNCETDFVARNDIFGALARDIAHTAAWFPIVAASETSAVLSDVDVAAFLECPIIPFEASEENKHDVISVRAAITSVVARLGEKVALGRVASLAPTSGGSHGSALVCGSFAHGTASAPPAPQTPVAATFASGRVASLLAVQVHGPLSQRIMSRTATTQHNDHDHDRNGDDERKRQLRALARSLARQAAGFPTTSVDAPSATAAVASDASSETSGALLTQPFVMLLPAAGLDPSVNEQKSVRDALELWSNTYAGQADGIRVAALRRWEVGETAARPSDETSFADQVKEAAGLA</sequence>
<proteinExistence type="inferred from homology"/>
<feature type="chain" id="PRO_0000402346" description="Elongation factor Ts, mitochondrial">
    <location>
        <begin position="1"/>
        <end position="406"/>
    </location>
</feature>
<feature type="region of interest" description="Disordered" evidence="2">
    <location>
        <begin position="387"/>
        <end position="406"/>
    </location>
</feature>
<accession>A8PRT2</accession>
<organism>
    <name type="scientific">Malassezia globosa (strain ATCC MYA-4612 / CBS 7966)</name>
    <name type="common">Dandruff-associated fungus</name>
    <dbReference type="NCBI Taxonomy" id="425265"/>
    <lineage>
        <taxon>Eukaryota</taxon>
        <taxon>Fungi</taxon>
        <taxon>Dikarya</taxon>
        <taxon>Basidiomycota</taxon>
        <taxon>Ustilaginomycotina</taxon>
        <taxon>Malasseziomycetes</taxon>
        <taxon>Malasseziales</taxon>
        <taxon>Malasseziaceae</taxon>
        <taxon>Malassezia</taxon>
    </lineage>
</organism>
<comment type="function">
    <text evidence="1">Associates with the EF-Tu.GDP complex and induces the exchange of GDP to GTP. It remains bound to the aminoacyl-tRNA.EF-Tu.GTP complex up to the GTP hydrolysis stage on the ribosome.</text>
</comment>
<comment type="subcellular location">
    <subcellularLocation>
        <location evidence="1">Mitochondrion</location>
    </subcellularLocation>
</comment>
<comment type="miscellaneous">
    <text evidence="1">This protein may be expected to contain an N-terminal transit peptide but none has been predicted.</text>
</comment>
<comment type="similarity">
    <text evidence="1">Belongs to the EF-Ts family.</text>
</comment>
<keyword id="KW-0251">Elongation factor</keyword>
<keyword id="KW-0496">Mitochondrion</keyword>
<keyword id="KW-0648">Protein biosynthesis</keyword>
<keyword id="KW-1185">Reference proteome</keyword>
<protein>
    <recommendedName>
        <fullName evidence="1">Elongation factor Ts, mitochondrial</fullName>
        <shortName evidence="1">EF-Ts</shortName>
        <shortName evidence="1">EF-TsMt</shortName>
    </recommendedName>
</protein>
<name>EFTS_MALGO</name>
<reference key="1">
    <citation type="journal article" date="2007" name="Proc. Natl. Acad. Sci. U.S.A.">
        <title>Dandruff-associated Malassezia genomes reveal convergent and divergent virulence traits shared with plant and human fungal pathogens.</title>
        <authorList>
            <person name="Xu J."/>
            <person name="Saunders C.W."/>
            <person name="Hu P."/>
            <person name="Grant R.A."/>
            <person name="Boekhout T."/>
            <person name="Kuramae E.E."/>
            <person name="Kronstad J.W."/>
            <person name="DeAngelis Y.M."/>
            <person name="Reeder N.L."/>
            <person name="Johnstone K.R."/>
            <person name="Leland M."/>
            <person name="Fieno A.M."/>
            <person name="Begley W.M."/>
            <person name="Sun Y."/>
            <person name="Lacey M.P."/>
            <person name="Chaudhary T."/>
            <person name="Keough T."/>
            <person name="Chu L."/>
            <person name="Sears R."/>
            <person name="Yuan B."/>
            <person name="Dawson T.L. Jr."/>
        </authorList>
    </citation>
    <scope>NUCLEOTIDE SEQUENCE [LARGE SCALE GENOMIC DNA]</scope>
    <source>
        <strain>ATCC MYA-4612 / CBS 7966</strain>
    </source>
</reference>
<gene>
    <name evidence="1" type="primary">TSF1</name>
    <name type="ORF">MGL_0122</name>
</gene>
<evidence type="ECO:0000255" key="1">
    <source>
        <dbReference type="HAMAP-Rule" id="MF_03135"/>
    </source>
</evidence>
<evidence type="ECO:0000256" key="2">
    <source>
        <dbReference type="SAM" id="MobiDB-lite"/>
    </source>
</evidence>